<gene>
    <name type="primary">MIR22HG</name>
    <name type="synonym">C17orf91</name>
</gene>
<organism>
    <name type="scientific">Homo sapiens</name>
    <name type="common">Human</name>
    <dbReference type="NCBI Taxonomy" id="9606"/>
    <lineage>
        <taxon>Eukaryota</taxon>
        <taxon>Metazoa</taxon>
        <taxon>Chordata</taxon>
        <taxon>Craniata</taxon>
        <taxon>Vertebrata</taxon>
        <taxon>Euteleostomi</taxon>
        <taxon>Mammalia</taxon>
        <taxon>Eutheria</taxon>
        <taxon>Euarchontoglires</taxon>
        <taxon>Primates</taxon>
        <taxon>Haplorrhini</taxon>
        <taxon>Catarrhini</taxon>
        <taxon>Hominidae</taxon>
        <taxon>Homo</taxon>
    </lineage>
</organism>
<name>CQ091_HUMAN</name>
<keyword id="KW-1185">Reference proteome</keyword>
<dbReference type="EMBL" id="BC119720">
    <property type="protein sequence ID" value="AAI19721.1"/>
    <property type="molecule type" value="mRNA"/>
</dbReference>
<dbReference type="EMBL" id="BC119721">
    <property type="protein sequence ID" value="AAI19722.1"/>
    <property type="molecule type" value="mRNA"/>
</dbReference>
<dbReference type="BioMuta" id="HGNC:28219"/>
<dbReference type="AGR" id="HGNC:28219"/>
<dbReference type="GeneCards" id="MIR22HG"/>
<dbReference type="HGNC" id="HGNC:28219">
    <property type="gene designation" value="MIR22HG"/>
</dbReference>
<dbReference type="neXtProt" id="NX_Q0VDD5"/>
<dbReference type="InParanoid" id="Q0VDD5"/>
<dbReference type="PAN-GO" id="Q0VDD5">
    <property type="GO annotations" value="0 GO annotations based on evolutionary models"/>
</dbReference>
<dbReference type="PathwayCommons" id="Q0VDD5"/>
<dbReference type="Pharos" id="Q0VDD5">
    <property type="development level" value="Tdark"/>
</dbReference>
<dbReference type="Proteomes" id="UP000005640">
    <property type="component" value="Unplaced"/>
</dbReference>
<dbReference type="RNAct" id="Q0VDD5">
    <property type="molecule type" value="protein"/>
</dbReference>
<sequence length="57" mass="6478">MGWEGPNSRVDDTFWASWRAFAQIGPARSGFRLETLAGLRSRRLKQPKAFCLRDVAP</sequence>
<comment type="caution">
    <text evidence="1">Product of a dubious CDS prediction. May be a non-coding RNA.</text>
</comment>
<proteinExistence type="uncertain"/>
<reference key="1">
    <citation type="journal article" date="2004" name="Genome Res.">
        <title>The status, quality, and expansion of the NIH full-length cDNA project: the Mammalian Gene Collection (MGC).</title>
        <authorList>
            <consortium name="The MGC Project Team"/>
        </authorList>
    </citation>
    <scope>NUCLEOTIDE SEQUENCE [LARGE SCALE MRNA]</scope>
</reference>
<protein>
    <recommendedName>
        <fullName>Putative uncharacterized protein encoded by MIR22HG</fullName>
    </recommendedName>
</protein>
<evidence type="ECO:0000305" key="1"/>
<feature type="chain" id="PRO_0000317191" description="Putative uncharacterized protein encoded by MIR22HG">
    <location>
        <begin position="1"/>
        <end position="57"/>
    </location>
</feature>
<feature type="sequence conflict" description="In Ref. 1; AAI19721." evidence="1" ref="1">
    <original>F</original>
    <variation>S</variation>
    <location>
        <position position="21"/>
    </location>
</feature>
<accession>Q0VDD5</accession>
<accession>Q0VDD6</accession>